<protein>
    <recommendedName>
        <fullName evidence="1">Carbamoyl phosphate synthase small chain</fullName>
        <ecNumber evidence="1">6.3.5.5</ecNumber>
    </recommendedName>
    <alternativeName>
        <fullName evidence="1">Carbamoyl phosphate synthetase glutamine chain</fullName>
    </alternativeName>
</protein>
<sequence>MKAFLVLDNGTIFEGESFGYETESVGEIVFNTSMAGYQEILTDPSYCNQIITLTYPMIGNYGIHPDNMESSKIQASGLIVKEYVDLPSNFKSEKTLSQFLKEYKIPAIQGIDTRKLTRFIRTNGSPNGGIFVASEYSPSFLEKVKSFPGIINADLAKVVTTSSKYIFGTHTGKKFKLAVYDYGVKTNILRLLDANGFAVTVYPAKTPSEEIMKEGTDAFFLSNGPGDPAPLDYAIASTQKIMEKRYPLFGICLGHQIIGLSLGKKTEKMKFGHRGGNQPVKNLETGQVEITSQNHGFAVIDDQKQDEPISFLNLNDHTVEGILKSGYPLLTVQYHPESAPGPNDSRYLFQKFYDLVEKTKKG</sequence>
<evidence type="ECO:0000255" key="1">
    <source>
        <dbReference type="HAMAP-Rule" id="MF_01209"/>
    </source>
</evidence>
<comment type="function">
    <text evidence="1">Small subunit of the glutamine-dependent carbamoyl phosphate synthetase (CPSase). CPSase catalyzes the formation of carbamoyl phosphate from the ammonia moiety of glutamine, carbonate, and phosphate donated by ATP, constituting the first step of 2 biosynthetic pathways, one leading to arginine and/or urea and the other to pyrimidine nucleotides. The small subunit (glutamine amidotransferase) binds and cleaves glutamine to supply the large subunit with the substrate ammonia.</text>
</comment>
<comment type="catalytic activity">
    <reaction evidence="1">
        <text>hydrogencarbonate + L-glutamine + 2 ATP + H2O = carbamoyl phosphate + L-glutamate + 2 ADP + phosphate + 2 H(+)</text>
        <dbReference type="Rhea" id="RHEA:18633"/>
        <dbReference type="ChEBI" id="CHEBI:15377"/>
        <dbReference type="ChEBI" id="CHEBI:15378"/>
        <dbReference type="ChEBI" id="CHEBI:17544"/>
        <dbReference type="ChEBI" id="CHEBI:29985"/>
        <dbReference type="ChEBI" id="CHEBI:30616"/>
        <dbReference type="ChEBI" id="CHEBI:43474"/>
        <dbReference type="ChEBI" id="CHEBI:58228"/>
        <dbReference type="ChEBI" id="CHEBI:58359"/>
        <dbReference type="ChEBI" id="CHEBI:456216"/>
        <dbReference type="EC" id="6.3.5.5"/>
    </reaction>
</comment>
<comment type="catalytic activity">
    <molecule>Carbamoyl phosphate synthase small chain</molecule>
    <reaction evidence="1">
        <text>L-glutamine + H2O = L-glutamate + NH4(+)</text>
        <dbReference type="Rhea" id="RHEA:15889"/>
        <dbReference type="ChEBI" id="CHEBI:15377"/>
        <dbReference type="ChEBI" id="CHEBI:28938"/>
        <dbReference type="ChEBI" id="CHEBI:29985"/>
        <dbReference type="ChEBI" id="CHEBI:58359"/>
    </reaction>
</comment>
<comment type="pathway">
    <text evidence="1">Amino-acid biosynthesis; L-arginine biosynthesis; carbamoyl phosphate from bicarbonate: step 1/1.</text>
</comment>
<comment type="pathway">
    <text evidence="1">Pyrimidine metabolism; UMP biosynthesis via de novo pathway; (S)-dihydroorotate from bicarbonate: step 1/3.</text>
</comment>
<comment type="subunit">
    <text evidence="1">Composed of two chains; the small (or glutamine) chain promotes the hydrolysis of glutamine to ammonia, which is used by the large (or ammonia) chain to synthesize carbamoyl phosphate. Tetramer of heterodimers (alpha,beta)4.</text>
</comment>
<comment type="similarity">
    <text evidence="1">Belongs to the CarA family.</text>
</comment>
<dbReference type="EC" id="6.3.5.5" evidence="1"/>
<dbReference type="EMBL" id="AE010300">
    <property type="protein sequence ID" value="AAN48438.2"/>
    <property type="molecule type" value="Genomic_DNA"/>
</dbReference>
<dbReference type="RefSeq" id="NP_711420.2">
    <property type="nucleotide sequence ID" value="NC_004342.2"/>
</dbReference>
<dbReference type="RefSeq" id="WP_000643186.1">
    <property type="nucleotide sequence ID" value="NC_004342.2"/>
</dbReference>
<dbReference type="SMR" id="Q8F6R2"/>
<dbReference type="FunCoup" id="Q8F6R2">
    <property type="interactions" value="528"/>
</dbReference>
<dbReference type="STRING" id="189518.LA_1239"/>
<dbReference type="PaxDb" id="189518-LA_1239"/>
<dbReference type="EnsemblBacteria" id="AAN48438">
    <property type="protein sequence ID" value="AAN48438"/>
    <property type="gene ID" value="LA_1239"/>
</dbReference>
<dbReference type="KEGG" id="lil:LA_1239"/>
<dbReference type="PATRIC" id="fig|189518.3.peg.1239"/>
<dbReference type="HOGENOM" id="CLU_035901_1_1_12"/>
<dbReference type="InParanoid" id="Q8F6R2"/>
<dbReference type="OrthoDB" id="9804328at2"/>
<dbReference type="UniPathway" id="UPA00068">
    <property type="reaction ID" value="UER00171"/>
</dbReference>
<dbReference type="UniPathway" id="UPA00070">
    <property type="reaction ID" value="UER00115"/>
</dbReference>
<dbReference type="Proteomes" id="UP000001408">
    <property type="component" value="Chromosome I"/>
</dbReference>
<dbReference type="GO" id="GO:0005951">
    <property type="term" value="C:carbamoyl-phosphate synthase complex"/>
    <property type="evidence" value="ECO:0000318"/>
    <property type="project" value="GO_Central"/>
</dbReference>
<dbReference type="GO" id="GO:0005737">
    <property type="term" value="C:cytoplasm"/>
    <property type="evidence" value="ECO:0000318"/>
    <property type="project" value="GO_Central"/>
</dbReference>
<dbReference type="GO" id="GO:0005524">
    <property type="term" value="F:ATP binding"/>
    <property type="evidence" value="ECO:0007669"/>
    <property type="project" value="UniProtKB-UniRule"/>
</dbReference>
<dbReference type="GO" id="GO:0004088">
    <property type="term" value="F:carbamoyl-phosphate synthase (glutamine-hydrolyzing) activity"/>
    <property type="evidence" value="ECO:0007669"/>
    <property type="project" value="UniProtKB-UniRule"/>
</dbReference>
<dbReference type="GO" id="GO:0004359">
    <property type="term" value="F:glutaminase activity"/>
    <property type="evidence" value="ECO:0007669"/>
    <property type="project" value="RHEA"/>
</dbReference>
<dbReference type="GO" id="GO:0006207">
    <property type="term" value="P:'de novo' pyrimidine nucleobase biosynthetic process"/>
    <property type="evidence" value="ECO:0007669"/>
    <property type="project" value="InterPro"/>
</dbReference>
<dbReference type="GO" id="GO:0044205">
    <property type="term" value="P:'de novo' UMP biosynthetic process"/>
    <property type="evidence" value="ECO:0007669"/>
    <property type="project" value="UniProtKB-UniRule"/>
</dbReference>
<dbReference type="GO" id="GO:0006541">
    <property type="term" value="P:glutamine metabolic process"/>
    <property type="evidence" value="ECO:0007669"/>
    <property type="project" value="InterPro"/>
</dbReference>
<dbReference type="GO" id="GO:0006526">
    <property type="term" value="P:L-arginine biosynthetic process"/>
    <property type="evidence" value="ECO:0000318"/>
    <property type="project" value="GO_Central"/>
</dbReference>
<dbReference type="CDD" id="cd01744">
    <property type="entry name" value="GATase1_CPSase"/>
    <property type="match status" value="1"/>
</dbReference>
<dbReference type="FunFam" id="3.40.50.880:FF:000065">
    <property type="entry name" value="Carbamoyl-phosphate synthase small chain"/>
    <property type="match status" value="1"/>
</dbReference>
<dbReference type="FunFam" id="3.50.30.20:FF:000001">
    <property type="entry name" value="Carbamoyl-phosphate synthase small chain"/>
    <property type="match status" value="1"/>
</dbReference>
<dbReference type="Gene3D" id="3.40.50.880">
    <property type="match status" value="1"/>
</dbReference>
<dbReference type="Gene3D" id="3.50.30.20">
    <property type="entry name" value="Carbamoyl-phosphate synthase small subunit, N-terminal domain"/>
    <property type="match status" value="1"/>
</dbReference>
<dbReference type="HAMAP" id="MF_01209">
    <property type="entry name" value="CPSase_S_chain"/>
    <property type="match status" value="1"/>
</dbReference>
<dbReference type="InterPro" id="IPR050472">
    <property type="entry name" value="Anth_synth/Amidotransfase"/>
</dbReference>
<dbReference type="InterPro" id="IPR006274">
    <property type="entry name" value="CarbamoylP_synth_ssu"/>
</dbReference>
<dbReference type="InterPro" id="IPR002474">
    <property type="entry name" value="CarbamoylP_synth_ssu_N"/>
</dbReference>
<dbReference type="InterPro" id="IPR036480">
    <property type="entry name" value="CarbP_synth_ssu_N_sf"/>
</dbReference>
<dbReference type="InterPro" id="IPR029062">
    <property type="entry name" value="Class_I_gatase-like"/>
</dbReference>
<dbReference type="InterPro" id="IPR035686">
    <property type="entry name" value="CPSase_GATase1"/>
</dbReference>
<dbReference type="InterPro" id="IPR017926">
    <property type="entry name" value="GATASE"/>
</dbReference>
<dbReference type="NCBIfam" id="TIGR01368">
    <property type="entry name" value="CPSaseIIsmall"/>
    <property type="match status" value="1"/>
</dbReference>
<dbReference type="NCBIfam" id="NF009475">
    <property type="entry name" value="PRK12838.1"/>
    <property type="match status" value="1"/>
</dbReference>
<dbReference type="PANTHER" id="PTHR43418:SF7">
    <property type="entry name" value="CARBAMOYL-PHOSPHATE SYNTHASE SMALL CHAIN"/>
    <property type="match status" value="1"/>
</dbReference>
<dbReference type="PANTHER" id="PTHR43418">
    <property type="entry name" value="MULTIFUNCTIONAL TRYPTOPHAN BIOSYNTHESIS PROTEIN-RELATED"/>
    <property type="match status" value="1"/>
</dbReference>
<dbReference type="Pfam" id="PF00988">
    <property type="entry name" value="CPSase_sm_chain"/>
    <property type="match status" value="1"/>
</dbReference>
<dbReference type="Pfam" id="PF00117">
    <property type="entry name" value="GATase"/>
    <property type="match status" value="1"/>
</dbReference>
<dbReference type="PRINTS" id="PR00097">
    <property type="entry name" value="ANTSNTHASEII"/>
</dbReference>
<dbReference type="PRINTS" id="PR00099">
    <property type="entry name" value="CPSGATASE"/>
</dbReference>
<dbReference type="PRINTS" id="PR00096">
    <property type="entry name" value="GATASE"/>
</dbReference>
<dbReference type="SMART" id="SM01097">
    <property type="entry name" value="CPSase_sm_chain"/>
    <property type="match status" value="1"/>
</dbReference>
<dbReference type="SUPFAM" id="SSF52021">
    <property type="entry name" value="Carbamoyl phosphate synthetase, small subunit N-terminal domain"/>
    <property type="match status" value="1"/>
</dbReference>
<dbReference type="SUPFAM" id="SSF52317">
    <property type="entry name" value="Class I glutamine amidotransferase-like"/>
    <property type="match status" value="1"/>
</dbReference>
<dbReference type="PROSITE" id="PS51273">
    <property type="entry name" value="GATASE_TYPE_1"/>
    <property type="match status" value="1"/>
</dbReference>
<keyword id="KW-0028">Amino-acid biosynthesis</keyword>
<keyword id="KW-0055">Arginine biosynthesis</keyword>
<keyword id="KW-0067">ATP-binding</keyword>
<keyword id="KW-0315">Glutamine amidotransferase</keyword>
<keyword id="KW-0436">Ligase</keyword>
<keyword id="KW-0547">Nucleotide-binding</keyword>
<keyword id="KW-0665">Pyrimidine biosynthesis</keyword>
<keyword id="KW-1185">Reference proteome</keyword>
<gene>
    <name evidence="1" type="primary">carA</name>
    <name type="ordered locus">LA_1239</name>
</gene>
<reference key="1">
    <citation type="journal article" date="2003" name="Nature">
        <title>Unique physiological and pathogenic features of Leptospira interrogans revealed by whole-genome sequencing.</title>
        <authorList>
            <person name="Ren S.-X."/>
            <person name="Fu G."/>
            <person name="Jiang X.-G."/>
            <person name="Zeng R."/>
            <person name="Miao Y.-G."/>
            <person name="Xu H."/>
            <person name="Zhang Y.-X."/>
            <person name="Xiong H."/>
            <person name="Lu G."/>
            <person name="Lu L.-F."/>
            <person name="Jiang H.-Q."/>
            <person name="Jia J."/>
            <person name="Tu Y.-F."/>
            <person name="Jiang J.-X."/>
            <person name="Gu W.-Y."/>
            <person name="Zhang Y.-Q."/>
            <person name="Cai Z."/>
            <person name="Sheng H.-H."/>
            <person name="Yin H.-F."/>
            <person name="Zhang Y."/>
            <person name="Zhu G.-F."/>
            <person name="Wan M."/>
            <person name="Huang H.-L."/>
            <person name="Qian Z."/>
            <person name="Wang S.-Y."/>
            <person name="Ma W."/>
            <person name="Yao Z.-J."/>
            <person name="Shen Y."/>
            <person name="Qiang B.-Q."/>
            <person name="Xia Q.-C."/>
            <person name="Guo X.-K."/>
            <person name="Danchin A."/>
            <person name="Saint Girons I."/>
            <person name="Somerville R.L."/>
            <person name="Wen Y.-M."/>
            <person name="Shi M.-H."/>
            <person name="Chen Z."/>
            <person name="Xu J.-G."/>
            <person name="Zhao G.-P."/>
        </authorList>
    </citation>
    <scope>NUCLEOTIDE SEQUENCE [LARGE SCALE GENOMIC DNA]</scope>
    <source>
        <strain>56601</strain>
    </source>
</reference>
<accession>Q8F6R2</accession>
<name>CARA_LEPIN</name>
<proteinExistence type="inferred from homology"/>
<feature type="chain" id="PRO_0000112289" description="Carbamoyl phosphate synthase small chain">
    <location>
        <begin position="1"/>
        <end position="362"/>
    </location>
</feature>
<feature type="domain" description="Glutamine amidotransferase type-1" evidence="1">
    <location>
        <begin position="176"/>
        <end position="362"/>
    </location>
</feature>
<feature type="region of interest" description="CPSase" evidence="1">
    <location>
        <begin position="1"/>
        <end position="172"/>
    </location>
</feature>
<feature type="active site" description="Nucleophile" evidence="1">
    <location>
        <position position="252"/>
    </location>
</feature>
<feature type="active site" evidence="1">
    <location>
        <position position="335"/>
    </location>
</feature>
<feature type="active site" evidence="1">
    <location>
        <position position="337"/>
    </location>
</feature>
<feature type="binding site" evidence="1">
    <location>
        <position position="45"/>
    </location>
    <ligand>
        <name>L-glutamine</name>
        <dbReference type="ChEBI" id="CHEBI:58359"/>
    </ligand>
</feature>
<feature type="binding site" evidence="1">
    <location>
        <position position="224"/>
    </location>
    <ligand>
        <name>L-glutamine</name>
        <dbReference type="ChEBI" id="CHEBI:58359"/>
    </ligand>
</feature>
<feature type="binding site" evidence="1">
    <location>
        <position position="226"/>
    </location>
    <ligand>
        <name>L-glutamine</name>
        <dbReference type="ChEBI" id="CHEBI:58359"/>
    </ligand>
</feature>
<feature type="binding site" evidence="1">
    <location>
        <position position="253"/>
    </location>
    <ligand>
        <name>L-glutamine</name>
        <dbReference type="ChEBI" id="CHEBI:58359"/>
    </ligand>
</feature>
<feature type="binding site" evidence="1">
    <location>
        <position position="256"/>
    </location>
    <ligand>
        <name>L-glutamine</name>
        <dbReference type="ChEBI" id="CHEBI:58359"/>
    </ligand>
</feature>
<feature type="binding site" evidence="1">
    <location>
        <position position="294"/>
    </location>
    <ligand>
        <name>L-glutamine</name>
        <dbReference type="ChEBI" id="CHEBI:58359"/>
    </ligand>
</feature>
<feature type="binding site" evidence="1">
    <location>
        <position position="296"/>
    </location>
    <ligand>
        <name>L-glutamine</name>
        <dbReference type="ChEBI" id="CHEBI:58359"/>
    </ligand>
</feature>
<feature type="binding site" evidence="1">
    <location>
        <position position="297"/>
    </location>
    <ligand>
        <name>L-glutamine</name>
        <dbReference type="ChEBI" id="CHEBI:58359"/>
    </ligand>
</feature>
<organism>
    <name type="scientific">Leptospira interrogans serogroup Icterohaemorrhagiae serovar Lai (strain 56601)</name>
    <dbReference type="NCBI Taxonomy" id="189518"/>
    <lineage>
        <taxon>Bacteria</taxon>
        <taxon>Pseudomonadati</taxon>
        <taxon>Spirochaetota</taxon>
        <taxon>Spirochaetia</taxon>
        <taxon>Leptospirales</taxon>
        <taxon>Leptospiraceae</taxon>
        <taxon>Leptospira</taxon>
    </lineage>
</organism>